<feature type="chain" id="PRO_0000056950" description="8-oxo-dGTP diphosphatase">
    <location>
        <begin position="1"/>
        <end position="159"/>
    </location>
</feature>
<feature type="domain" description="Nudix hydrolase" evidence="2">
    <location>
        <begin position="1"/>
        <end position="133"/>
    </location>
</feature>
<feature type="short sequence motif" description="Nudix box">
    <location>
        <begin position="38"/>
        <end position="59"/>
    </location>
</feature>
<feature type="binding site" evidence="1">
    <location>
        <position position="38"/>
    </location>
    <ligand>
        <name>Mg(2+)</name>
        <dbReference type="ChEBI" id="CHEBI:18420"/>
    </ligand>
</feature>
<feature type="binding site" evidence="1">
    <location>
        <position position="53"/>
    </location>
    <ligand>
        <name>Mg(2+)</name>
        <dbReference type="ChEBI" id="CHEBI:18420"/>
    </ligand>
</feature>
<feature type="binding site" evidence="1">
    <location>
        <position position="56"/>
    </location>
    <ligand>
        <name>Mg(2+)</name>
        <dbReference type="ChEBI" id="CHEBI:18420"/>
    </ligand>
</feature>
<feature type="binding site" evidence="1">
    <location>
        <position position="57"/>
    </location>
    <ligand>
        <name>Mg(2+)</name>
        <dbReference type="ChEBI" id="CHEBI:18420"/>
    </ligand>
</feature>
<feature type="sequence conflict" description="In Ref. 1; BAA11250." evidence="3" ref="1">
    <original>T</original>
    <variation>I</variation>
    <location>
        <position position="2"/>
    </location>
</feature>
<feature type="sequence conflict" description="In Ref. 1; BAA11250." evidence="3" ref="1">
    <original>C</original>
    <variation>R</variation>
    <location>
        <position position="14"/>
    </location>
</feature>
<feature type="sequence conflict" description="In Ref. 1; BAA11250." evidence="3" ref="1">
    <original>D</original>
    <variation>E</variation>
    <location>
        <position position="133"/>
    </location>
</feature>
<keyword id="KW-0227">DNA damage</keyword>
<keyword id="KW-0234">DNA repair</keyword>
<keyword id="KW-0235">DNA replication</keyword>
<keyword id="KW-0378">Hydrolase</keyword>
<keyword id="KW-0460">Magnesium</keyword>
<keyword id="KW-0479">Metal-binding</keyword>
<keyword id="KW-0515">Mutator protein</keyword>
<keyword id="KW-1185">Reference proteome</keyword>
<organism>
    <name type="scientific">Streptococcus mutans serotype c (strain ATCC 700610 / UA159)</name>
    <dbReference type="NCBI Taxonomy" id="210007"/>
    <lineage>
        <taxon>Bacteria</taxon>
        <taxon>Bacillati</taxon>
        <taxon>Bacillota</taxon>
        <taxon>Bacilli</taxon>
        <taxon>Lactobacillales</taxon>
        <taxon>Streptococcaceae</taxon>
        <taxon>Streptococcus</taxon>
    </lineage>
</organism>
<accession>P95781</accession>
<sequence>MTKLATICYIDNGCELLLMHRNKKPNDVHEGKWISVGGKLEKGESPDECARREIFEETHLIVKQMDFKGIITFPDFTPGHDWYTYVFKVRDFEGRLISDKDSREGTLEWVPYNQVLTKPTWEGDYEIFKWILDDAPFFSAKFVYQEQKLVDKHVIFYEK</sequence>
<dbReference type="EC" id="3.6.1.55"/>
<dbReference type="EMBL" id="D78182">
    <property type="protein sequence ID" value="BAA11250.1"/>
    <property type="molecule type" value="Genomic_DNA"/>
</dbReference>
<dbReference type="EMBL" id="AE014133">
    <property type="protein sequence ID" value="AAN59114.1"/>
    <property type="molecule type" value="Genomic_DNA"/>
</dbReference>
<dbReference type="RefSeq" id="NP_721808.1">
    <property type="nucleotide sequence ID" value="NC_004350.2"/>
</dbReference>
<dbReference type="RefSeq" id="WP_002263089.1">
    <property type="nucleotide sequence ID" value="NC_004350.2"/>
</dbReference>
<dbReference type="SMR" id="P95781"/>
<dbReference type="STRING" id="210007.SMU_1455"/>
<dbReference type="KEGG" id="smu:SMU_1455"/>
<dbReference type="PATRIC" id="fig|210007.7.peg.1294"/>
<dbReference type="eggNOG" id="COG1051">
    <property type="taxonomic scope" value="Bacteria"/>
</dbReference>
<dbReference type="HOGENOM" id="CLU_037162_11_2_9"/>
<dbReference type="OrthoDB" id="9804563at2"/>
<dbReference type="PhylomeDB" id="P95781"/>
<dbReference type="Proteomes" id="UP000002512">
    <property type="component" value="Chromosome"/>
</dbReference>
<dbReference type="GO" id="GO:0005737">
    <property type="term" value="C:cytoplasm"/>
    <property type="evidence" value="ECO:0007669"/>
    <property type="project" value="TreeGrafter"/>
</dbReference>
<dbReference type="GO" id="GO:0035539">
    <property type="term" value="F:8-oxo-7,8-dihydrodeoxyguanosine triphosphate pyrophosphatase activity"/>
    <property type="evidence" value="ECO:0007669"/>
    <property type="project" value="UniProtKB-EC"/>
</dbReference>
<dbReference type="GO" id="GO:0008413">
    <property type="term" value="F:8-oxo-7,8-dihydroguanosine triphosphate pyrophosphatase activity"/>
    <property type="evidence" value="ECO:0007669"/>
    <property type="project" value="InterPro"/>
</dbReference>
<dbReference type="GO" id="GO:0046872">
    <property type="term" value="F:metal ion binding"/>
    <property type="evidence" value="ECO:0007669"/>
    <property type="project" value="UniProtKB-KW"/>
</dbReference>
<dbReference type="GO" id="GO:0006281">
    <property type="term" value="P:DNA repair"/>
    <property type="evidence" value="ECO:0007669"/>
    <property type="project" value="UniProtKB-KW"/>
</dbReference>
<dbReference type="GO" id="GO:0006260">
    <property type="term" value="P:DNA replication"/>
    <property type="evidence" value="ECO:0007669"/>
    <property type="project" value="UniProtKB-KW"/>
</dbReference>
<dbReference type="CDD" id="cd18886">
    <property type="entry name" value="NUDIX_MutT_Nudt1"/>
    <property type="match status" value="1"/>
</dbReference>
<dbReference type="Gene3D" id="3.90.79.10">
    <property type="entry name" value="Nucleoside Triphosphate Pyrophosphohydrolase"/>
    <property type="match status" value="1"/>
</dbReference>
<dbReference type="InterPro" id="IPR003562">
    <property type="entry name" value="Mutator_MutX_prot"/>
</dbReference>
<dbReference type="InterPro" id="IPR015797">
    <property type="entry name" value="NUDIX_hydrolase-like_dom_sf"/>
</dbReference>
<dbReference type="InterPro" id="IPR020084">
    <property type="entry name" value="NUDIX_hydrolase_CS"/>
</dbReference>
<dbReference type="InterPro" id="IPR000086">
    <property type="entry name" value="NUDIX_hydrolase_dom"/>
</dbReference>
<dbReference type="PANTHER" id="PTHR43758">
    <property type="entry name" value="7,8-DIHYDRO-8-OXOGUANINE TRIPHOSPHATASE"/>
    <property type="match status" value="1"/>
</dbReference>
<dbReference type="PANTHER" id="PTHR43758:SF2">
    <property type="entry name" value="OXIDIZED PURINE NUCLEOSIDE TRIPHOSPHATE HYDROLASE"/>
    <property type="match status" value="1"/>
</dbReference>
<dbReference type="Pfam" id="PF00293">
    <property type="entry name" value="NUDIX"/>
    <property type="match status" value="1"/>
</dbReference>
<dbReference type="PRINTS" id="PR01402">
    <property type="entry name" value="MUTATORMUTX"/>
</dbReference>
<dbReference type="SUPFAM" id="SSF55811">
    <property type="entry name" value="Nudix"/>
    <property type="match status" value="1"/>
</dbReference>
<dbReference type="PROSITE" id="PS51462">
    <property type="entry name" value="NUDIX"/>
    <property type="match status" value="1"/>
</dbReference>
<dbReference type="PROSITE" id="PS00893">
    <property type="entry name" value="NUDIX_BOX"/>
    <property type="match status" value="1"/>
</dbReference>
<comment type="function">
    <text evidence="1">Involved in the DNA repair system to avoid A.T to G.C transversions. Degrades 8-oxo-dGTP to the monophosphate, but is also active on all of the nucleoside triphosphates (By similarity).</text>
</comment>
<comment type="catalytic activity">
    <reaction>
        <text>8-oxo-dGTP + H2O = 8-oxo-dGMP + diphosphate + H(+)</text>
        <dbReference type="Rhea" id="RHEA:31575"/>
        <dbReference type="ChEBI" id="CHEBI:15377"/>
        <dbReference type="ChEBI" id="CHEBI:15378"/>
        <dbReference type="ChEBI" id="CHEBI:33019"/>
        <dbReference type="ChEBI" id="CHEBI:63224"/>
        <dbReference type="ChEBI" id="CHEBI:77896"/>
        <dbReference type="EC" id="3.6.1.55"/>
    </reaction>
</comment>
<comment type="cofactor">
    <cofactor evidence="1">
        <name>Mg(2+)</name>
        <dbReference type="ChEBI" id="CHEBI:18420"/>
    </cofactor>
</comment>
<comment type="subunit">
    <text evidence="1">Homotrimer.</text>
</comment>
<comment type="similarity">
    <text evidence="3">Belongs to the Nudix hydrolase family.</text>
</comment>
<proteinExistence type="inferred from homology"/>
<name>MUTX_STRMU</name>
<reference key="1">
    <citation type="submission" date="1997-02" db="EMBL/GenBank/DDBJ databases">
        <authorList>
            <person name="Tsukioka Y."/>
            <person name="Yamashita Y."/>
            <person name="Nakano Y."/>
            <person name="Oho T."/>
            <person name="Koga T."/>
        </authorList>
    </citation>
    <scope>NUCLEOTIDE SEQUENCE [GENOMIC DNA]</scope>
    <source>
        <strain>XC</strain>
    </source>
</reference>
<reference key="2">
    <citation type="journal article" date="2002" name="Proc. Natl. Acad. Sci. U.S.A.">
        <title>Genome sequence of Streptococcus mutans UA159, a cariogenic dental pathogen.</title>
        <authorList>
            <person name="Ajdic D.J."/>
            <person name="McShan W.M."/>
            <person name="McLaughlin R.E."/>
            <person name="Savic G."/>
            <person name="Chang J."/>
            <person name="Carson M.B."/>
            <person name="Primeaux C."/>
            <person name="Tian R."/>
            <person name="Kenton S."/>
            <person name="Jia H.G."/>
            <person name="Lin S.P."/>
            <person name="Qian Y."/>
            <person name="Li S."/>
            <person name="Zhu H."/>
            <person name="Najar F.Z."/>
            <person name="Lai H."/>
            <person name="White J."/>
            <person name="Roe B.A."/>
            <person name="Ferretti J.J."/>
        </authorList>
    </citation>
    <scope>NUCLEOTIDE SEQUENCE [LARGE SCALE GENOMIC DNA]</scope>
    <source>
        <strain>ATCC 700610 / UA159</strain>
    </source>
</reference>
<protein>
    <recommendedName>
        <fullName>8-oxo-dGTP diphosphatase</fullName>
        <shortName>8-oxo-dGTPase</shortName>
        <ecNumber>3.6.1.55</ecNumber>
    </recommendedName>
    <alternativeName>
        <fullName>7,8-dihydro-8-oxoguanine-triphosphatase</fullName>
    </alternativeName>
    <alternativeName>
        <fullName>Mutator protein MutT</fullName>
    </alternativeName>
    <alternativeName>
        <fullName>dGTP pyrophosphohydrolase</fullName>
    </alternativeName>
</protein>
<gene>
    <name type="primary">mutX</name>
    <name type="ordered locus">SMU_1455</name>
</gene>
<evidence type="ECO:0000250" key="1"/>
<evidence type="ECO:0000255" key="2">
    <source>
        <dbReference type="PROSITE-ProRule" id="PRU00794"/>
    </source>
</evidence>
<evidence type="ECO:0000305" key="3"/>